<name>MAP1_MYCGA</name>
<gene>
    <name evidence="1" type="primary">map</name>
    <name type="ordered locus">MYCGA0720</name>
    <name type="ORF">MGA_0745</name>
</gene>
<sequence length="250" mass="29026">MIYIKNPNEIQKIKNAAQIYKKIVKQFNFDYIKNKSLKEIDQMLRDFVSQHHANSCYHGYLGFKGYHCLSLNQTIIHGLANDEIFTSKDKLTIDIGIELDNYYCDSAFTILGPDVNPRQKLLSEVTHNCIFELVKKIVPNQTTTNDLGIWTEEYAKKYGYSVIKDFGGHGCGIKIHEDPIILNYGTKKSSELLTPNMVICIEPMFFEKDNRYYIDPDDSWSVKPVNKNQYVCHWEHMVLIKEDQAEILTL</sequence>
<evidence type="ECO:0000255" key="1">
    <source>
        <dbReference type="HAMAP-Rule" id="MF_01974"/>
    </source>
</evidence>
<evidence type="ECO:0000305" key="2"/>
<protein>
    <recommendedName>
        <fullName evidence="1">Methionine aminopeptidase</fullName>
        <shortName evidence="1">MAP</shortName>
        <shortName evidence="1">MetAP</shortName>
        <ecNumber evidence="1">3.4.11.18</ecNumber>
    </recommendedName>
    <alternativeName>
        <fullName evidence="1">Peptidase M</fullName>
    </alternativeName>
</protein>
<accession>O52353</accession>
<feature type="chain" id="PRO_0000148945" description="Methionine aminopeptidase">
    <location>
        <begin position="1"/>
        <end position="250"/>
    </location>
</feature>
<feature type="binding site" evidence="1">
    <location>
        <position position="77"/>
    </location>
    <ligand>
        <name>substrate</name>
    </ligand>
</feature>
<feature type="binding site" evidence="1">
    <location>
        <position position="94"/>
    </location>
    <ligand>
        <name>a divalent metal cation</name>
        <dbReference type="ChEBI" id="CHEBI:60240"/>
        <label>1</label>
    </ligand>
</feature>
<feature type="binding site" evidence="1">
    <location>
        <position position="105"/>
    </location>
    <ligand>
        <name>a divalent metal cation</name>
        <dbReference type="ChEBI" id="CHEBI:60240"/>
        <label>1</label>
    </ligand>
</feature>
<feature type="binding site" evidence="1">
    <location>
        <position position="105"/>
    </location>
    <ligand>
        <name>a divalent metal cation</name>
        <dbReference type="ChEBI" id="CHEBI:60240"/>
        <label>2</label>
        <note>catalytic</note>
    </ligand>
</feature>
<feature type="binding site" evidence="1">
    <location>
        <position position="169"/>
    </location>
    <ligand>
        <name>a divalent metal cation</name>
        <dbReference type="ChEBI" id="CHEBI:60240"/>
        <label>2</label>
        <note>catalytic</note>
    </ligand>
</feature>
<feature type="binding site" evidence="1">
    <location>
        <position position="176"/>
    </location>
    <ligand>
        <name>substrate</name>
    </ligand>
</feature>
<feature type="binding site" evidence="1">
    <location>
        <position position="202"/>
    </location>
    <ligand>
        <name>a divalent metal cation</name>
        <dbReference type="ChEBI" id="CHEBI:60240"/>
        <label>2</label>
        <note>catalytic</note>
    </ligand>
</feature>
<feature type="binding site" evidence="1">
    <location>
        <position position="235"/>
    </location>
    <ligand>
        <name>a divalent metal cation</name>
        <dbReference type="ChEBI" id="CHEBI:60240"/>
        <label>1</label>
    </ligand>
</feature>
<feature type="binding site" evidence="1">
    <location>
        <position position="235"/>
    </location>
    <ligand>
        <name>a divalent metal cation</name>
        <dbReference type="ChEBI" id="CHEBI:60240"/>
        <label>2</label>
        <note>catalytic</note>
    </ligand>
</feature>
<feature type="sequence conflict" description="In Ref. 1; AAB95408." evidence="2" ref="1">
    <original>Q</original>
    <variation>K</variation>
    <location>
        <position position="73"/>
    </location>
</feature>
<feature type="sequence conflict" description="In Ref. 1; AAB95408." evidence="2" ref="1">
    <original>E</original>
    <variation>D</variation>
    <location>
        <position position="83"/>
    </location>
</feature>
<feature type="sequence conflict" description="In Ref. 1; AAB95408." evidence="2" ref="1">
    <original>P</original>
    <variation>L</variation>
    <location>
        <position position="117"/>
    </location>
</feature>
<feature type="sequence conflict" description="In Ref. 1; AAB95408." evidence="2" ref="1">
    <original>E</original>
    <variation>D</variation>
    <location>
        <position position="132"/>
    </location>
</feature>
<feature type="sequence conflict" description="In Ref. 1; AAB95408." evidence="2" ref="1">
    <original>Y</original>
    <variation>H</variation>
    <location>
        <position position="158"/>
    </location>
</feature>
<feature type="sequence conflict" description="In Ref. 1; AAB95408." evidence="2" ref="1">
    <original>S</original>
    <variation>N</variation>
    <location>
        <position position="161"/>
    </location>
</feature>
<feature type="sequence conflict" description="In Ref. 1; AAB95408." evidence="2" ref="1">
    <original>SS</original>
    <variation>PG</variation>
    <location>
        <begin position="189"/>
        <end position="190"/>
    </location>
</feature>
<feature type="sequence conflict" description="In Ref. 1; AAB95408." evidence="2" ref="1">
    <original>D</original>
    <variation>V</variation>
    <location>
        <position position="217"/>
    </location>
</feature>
<organism>
    <name type="scientific">Mycoplasmoides gallisepticum (strain R(low / passage 15 / clone 2))</name>
    <name type="common">Mycoplasma gallisepticum</name>
    <dbReference type="NCBI Taxonomy" id="710127"/>
    <lineage>
        <taxon>Bacteria</taxon>
        <taxon>Bacillati</taxon>
        <taxon>Mycoplasmatota</taxon>
        <taxon>Mycoplasmoidales</taxon>
        <taxon>Mycoplasmoidaceae</taxon>
        <taxon>Mycoplasmoides</taxon>
    </lineage>
</organism>
<reference key="1">
    <citation type="journal article" date="2000" name="Mol. Biol. (Mosk.)">
        <title>Determination and analysis of the nucleotide sequence of a segment of a Mycoplasma gallisepticum strain A5969 chromosome, containing operons S10 and rrn23-5.</title>
        <authorList>
            <person name="Skamrov A.V."/>
            <person name="Gol'dman M.A."/>
            <person name="Feoktistova E.S."/>
            <person name="Bibilashvili R.S."/>
        </authorList>
    </citation>
    <scope>NUCLEOTIDE SEQUENCE [GENOMIC DNA]</scope>
    <source>
        <strain>A5969Var.B</strain>
    </source>
</reference>
<reference key="2">
    <citation type="journal article" date="2003" name="Microbiology">
        <title>The complete genome sequence of the avian pathogen Mycoplasma gallisepticum strain R(low).</title>
        <authorList>
            <person name="Papazisi L."/>
            <person name="Gorton T.S."/>
            <person name="Kutish G."/>
            <person name="Markham P.F."/>
            <person name="Browning G.F."/>
            <person name="Nguyen D.K."/>
            <person name="Swartzell S."/>
            <person name="Madan A."/>
            <person name="Mahairas G."/>
            <person name="Geary S.J."/>
        </authorList>
    </citation>
    <scope>NUCLEOTIDE SEQUENCE [LARGE SCALE GENOMIC DNA]</scope>
    <source>
        <strain>R(low / passage 15 / clone 2)</strain>
    </source>
</reference>
<comment type="function">
    <text evidence="1">Removes the N-terminal methionine from nascent proteins. The N-terminal methionine is often cleaved when the second residue in the primary sequence is small and uncharged (Met-Ala-, Cys, Gly, Pro, Ser, Thr, or Val). Requires deformylation of the N(alpha)-formylated initiator methionine before it can be hydrolyzed.</text>
</comment>
<comment type="catalytic activity">
    <reaction evidence="1">
        <text>Release of N-terminal amino acids, preferentially methionine, from peptides and arylamides.</text>
        <dbReference type="EC" id="3.4.11.18"/>
    </reaction>
</comment>
<comment type="cofactor">
    <cofactor evidence="1">
        <name>Co(2+)</name>
        <dbReference type="ChEBI" id="CHEBI:48828"/>
    </cofactor>
    <cofactor evidence="1">
        <name>Zn(2+)</name>
        <dbReference type="ChEBI" id="CHEBI:29105"/>
    </cofactor>
    <cofactor evidence="1">
        <name>Mn(2+)</name>
        <dbReference type="ChEBI" id="CHEBI:29035"/>
    </cofactor>
    <cofactor evidence="1">
        <name>Fe(2+)</name>
        <dbReference type="ChEBI" id="CHEBI:29033"/>
    </cofactor>
    <text evidence="1">Binds 2 divalent metal cations per subunit. Has a high-affinity and a low affinity metal-binding site. The true nature of the physiological cofactor is under debate. The enzyme is active with cobalt, zinc, manganese or divalent iron ions. Most likely, methionine aminopeptidases function as mononuclear Fe(2+)-metalloproteases under physiological conditions, and the catalytically relevant metal-binding site has been assigned to the histidine-containing high-affinity site.</text>
</comment>
<comment type="subunit">
    <text evidence="1">Monomer.</text>
</comment>
<comment type="similarity">
    <text evidence="1">Belongs to the peptidase M24A family. Methionine aminopeptidase type 1 subfamily.</text>
</comment>
<keyword id="KW-0031">Aminopeptidase</keyword>
<keyword id="KW-0378">Hydrolase</keyword>
<keyword id="KW-0479">Metal-binding</keyword>
<keyword id="KW-0645">Protease</keyword>
<keyword id="KW-1185">Reference proteome</keyword>
<proteinExistence type="inferred from homology"/>
<dbReference type="EC" id="3.4.11.18" evidence="1"/>
<dbReference type="EMBL" id="AF036708">
    <property type="protein sequence ID" value="AAB95408.1"/>
    <property type="molecule type" value="Genomic_DNA"/>
</dbReference>
<dbReference type="EMBL" id="AE015450">
    <property type="protein sequence ID" value="AAP56422.1"/>
    <property type="molecule type" value="Genomic_DNA"/>
</dbReference>
<dbReference type="RefSeq" id="WP_011113301.1">
    <property type="nucleotide sequence ID" value="NC_004829.2"/>
</dbReference>
<dbReference type="SMR" id="O52353"/>
<dbReference type="KEGG" id="mga:MGA_0745"/>
<dbReference type="PATRIC" id="fig|233150.7.peg.76"/>
<dbReference type="HOGENOM" id="CLU_015857_0_1_14"/>
<dbReference type="OrthoDB" id="9802055at2"/>
<dbReference type="Proteomes" id="UP000001418">
    <property type="component" value="Chromosome"/>
</dbReference>
<dbReference type="GO" id="GO:0005829">
    <property type="term" value="C:cytosol"/>
    <property type="evidence" value="ECO:0007669"/>
    <property type="project" value="TreeGrafter"/>
</dbReference>
<dbReference type="GO" id="GO:0004239">
    <property type="term" value="F:initiator methionyl aminopeptidase activity"/>
    <property type="evidence" value="ECO:0007669"/>
    <property type="project" value="UniProtKB-UniRule"/>
</dbReference>
<dbReference type="GO" id="GO:0046872">
    <property type="term" value="F:metal ion binding"/>
    <property type="evidence" value="ECO:0007669"/>
    <property type="project" value="UniProtKB-UniRule"/>
</dbReference>
<dbReference type="GO" id="GO:0070006">
    <property type="term" value="F:metalloaminopeptidase activity"/>
    <property type="evidence" value="ECO:0007669"/>
    <property type="project" value="UniProtKB-UniRule"/>
</dbReference>
<dbReference type="GO" id="GO:0006508">
    <property type="term" value="P:proteolysis"/>
    <property type="evidence" value="ECO:0007669"/>
    <property type="project" value="UniProtKB-KW"/>
</dbReference>
<dbReference type="CDD" id="cd01086">
    <property type="entry name" value="MetAP1"/>
    <property type="match status" value="1"/>
</dbReference>
<dbReference type="Gene3D" id="3.90.230.10">
    <property type="entry name" value="Creatinase/methionine aminopeptidase superfamily"/>
    <property type="match status" value="1"/>
</dbReference>
<dbReference type="HAMAP" id="MF_01974">
    <property type="entry name" value="MetAP_1"/>
    <property type="match status" value="1"/>
</dbReference>
<dbReference type="InterPro" id="IPR036005">
    <property type="entry name" value="Creatinase/aminopeptidase-like"/>
</dbReference>
<dbReference type="InterPro" id="IPR000994">
    <property type="entry name" value="Pept_M24"/>
</dbReference>
<dbReference type="InterPro" id="IPR001714">
    <property type="entry name" value="Pept_M24_MAP"/>
</dbReference>
<dbReference type="InterPro" id="IPR002467">
    <property type="entry name" value="Pept_M24A_MAP1"/>
</dbReference>
<dbReference type="NCBIfam" id="TIGR00500">
    <property type="entry name" value="met_pdase_I"/>
    <property type="match status" value="1"/>
</dbReference>
<dbReference type="PANTHER" id="PTHR43330">
    <property type="entry name" value="METHIONINE AMINOPEPTIDASE"/>
    <property type="match status" value="1"/>
</dbReference>
<dbReference type="PANTHER" id="PTHR43330:SF27">
    <property type="entry name" value="METHIONINE AMINOPEPTIDASE"/>
    <property type="match status" value="1"/>
</dbReference>
<dbReference type="Pfam" id="PF00557">
    <property type="entry name" value="Peptidase_M24"/>
    <property type="match status" value="1"/>
</dbReference>
<dbReference type="PRINTS" id="PR00599">
    <property type="entry name" value="MAPEPTIDASE"/>
</dbReference>
<dbReference type="SUPFAM" id="SSF55920">
    <property type="entry name" value="Creatinase/aminopeptidase"/>
    <property type="match status" value="1"/>
</dbReference>
<dbReference type="PROSITE" id="PS00680">
    <property type="entry name" value="MAP_1"/>
    <property type="match status" value="1"/>
</dbReference>